<reference key="1">
    <citation type="journal article" date="2007" name="PLoS Genet.">
        <title>Meningococcal genetic variation mechanisms viewed through comparative analysis of serogroup C strain FAM18.</title>
        <authorList>
            <person name="Bentley S.D."/>
            <person name="Vernikos G.S."/>
            <person name="Snyder L.A.S."/>
            <person name="Churcher C."/>
            <person name="Arrowsmith C."/>
            <person name="Chillingworth T."/>
            <person name="Cronin A."/>
            <person name="Davis P.H."/>
            <person name="Holroyd N.E."/>
            <person name="Jagels K."/>
            <person name="Maddison M."/>
            <person name="Moule S."/>
            <person name="Rabbinowitsch E."/>
            <person name="Sharp S."/>
            <person name="Unwin L."/>
            <person name="Whitehead S."/>
            <person name="Quail M.A."/>
            <person name="Achtman M."/>
            <person name="Barrell B.G."/>
            <person name="Saunders N.J."/>
            <person name="Parkhill J."/>
        </authorList>
    </citation>
    <scope>NUCLEOTIDE SEQUENCE [LARGE SCALE GENOMIC DNA]</scope>
    <source>
        <strain>ATCC 700532 / DSM 15464 / FAM18</strain>
    </source>
</reference>
<evidence type="ECO:0000255" key="1">
    <source>
        <dbReference type="HAMAP-Rule" id="MF_01521"/>
    </source>
</evidence>
<feature type="chain" id="PRO_0000296932" description="Putative manganese efflux pump MntP">
    <location>
        <begin position="1"/>
        <end position="188"/>
    </location>
</feature>
<feature type="transmembrane region" description="Helical" evidence="1">
    <location>
        <begin position="3"/>
        <end position="23"/>
    </location>
</feature>
<feature type="transmembrane region" description="Helical" evidence="1">
    <location>
        <begin position="35"/>
        <end position="55"/>
    </location>
</feature>
<feature type="transmembrane region" description="Helical" evidence="1">
    <location>
        <begin position="70"/>
        <end position="90"/>
    </location>
</feature>
<feature type="transmembrane region" description="Helical" evidence="1">
    <location>
        <begin position="104"/>
        <end position="126"/>
    </location>
</feature>
<feature type="transmembrane region" description="Helical" evidence="1">
    <location>
        <begin position="140"/>
        <end position="160"/>
    </location>
</feature>
<feature type="transmembrane region" description="Helical" evidence="1">
    <location>
        <begin position="167"/>
        <end position="187"/>
    </location>
</feature>
<gene>
    <name evidence="1" type="primary">mntP</name>
    <name type="ordered locus">NMC0207</name>
</gene>
<accession>A1KRP4</accession>
<name>MNTP_NEIMF</name>
<keyword id="KW-0997">Cell inner membrane</keyword>
<keyword id="KW-1003">Cell membrane</keyword>
<keyword id="KW-0406">Ion transport</keyword>
<keyword id="KW-0464">Manganese</keyword>
<keyword id="KW-0472">Membrane</keyword>
<keyword id="KW-0812">Transmembrane</keyword>
<keyword id="KW-1133">Transmembrane helix</keyword>
<keyword id="KW-0813">Transport</keyword>
<protein>
    <recommendedName>
        <fullName evidence="1">Putative manganese efflux pump MntP</fullName>
    </recommendedName>
</protein>
<dbReference type="EMBL" id="AM421808">
    <property type="protein sequence ID" value="CAM09523.1"/>
    <property type="molecule type" value="Genomic_DNA"/>
</dbReference>
<dbReference type="RefSeq" id="WP_002236626.1">
    <property type="nucleotide sequence ID" value="NC_008767.1"/>
</dbReference>
<dbReference type="KEGG" id="nmc:NMC0207"/>
<dbReference type="HOGENOM" id="CLU_096410_0_0_4"/>
<dbReference type="Proteomes" id="UP000002286">
    <property type="component" value="Chromosome"/>
</dbReference>
<dbReference type="GO" id="GO:0005886">
    <property type="term" value="C:plasma membrane"/>
    <property type="evidence" value="ECO:0007669"/>
    <property type="project" value="UniProtKB-SubCell"/>
</dbReference>
<dbReference type="GO" id="GO:0005384">
    <property type="term" value="F:manganese ion transmembrane transporter activity"/>
    <property type="evidence" value="ECO:0007669"/>
    <property type="project" value="UniProtKB-UniRule"/>
</dbReference>
<dbReference type="HAMAP" id="MF_01521">
    <property type="entry name" value="MntP_pump"/>
    <property type="match status" value="1"/>
</dbReference>
<dbReference type="InterPro" id="IPR003810">
    <property type="entry name" value="Mntp/YtaF"/>
</dbReference>
<dbReference type="InterPro" id="IPR022929">
    <property type="entry name" value="Put_MntP"/>
</dbReference>
<dbReference type="PANTHER" id="PTHR35529">
    <property type="entry name" value="MANGANESE EFFLUX PUMP MNTP-RELATED"/>
    <property type="match status" value="1"/>
</dbReference>
<dbReference type="PANTHER" id="PTHR35529:SF1">
    <property type="entry name" value="MANGANESE EFFLUX PUMP MNTP-RELATED"/>
    <property type="match status" value="1"/>
</dbReference>
<dbReference type="Pfam" id="PF02659">
    <property type="entry name" value="Mntp"/>
    <property type="match status" value="1"/>
</dbReference>
<proteinExistence type="inferred from homology"/>
<sequence length="188" mass="19695">MSLYALLLIALGMSMDAFAVALAKGAAVRMPPRKIAATALVFGTVEALTPLAGWVGGFYAKPFISEWDHWAAFVLLGGLGLKMMHEGLSGEAEDARENKRESWWLTVLTAFGTSIDSMIVGVGLAFMEVNIAFAAAIIGMATTVLVAVGLTVGRALGVLFGRRAEFAGGLVLIAIGTWTLLSHLGLIG</sequence>
<organism>
    <name type="scientific">Neisseria meningitidis serogroup C / serotype 2a (strain ATCC 700532 / DSM 15464 / FAM18)</name>
    <dbReference type="NCBI Taxonomy" id="272831"/>
    <lineage>
        <taxon>Bacteria</taxon>
        <taxon>Pseudomonadati</taxon>
        <taxon>Pseudomonadota</taxon>
        <taxon>Betaproteobacteria</taxon>
        <taxon>Neisseriales</taxon>
        <taxon>Neisseriaceae</taxon>
        <taxon>Neisseria</taxon>
    </lineage>
</organism>
<comment type="function">
    <text evidence="1">Probably functions as a manganese efflux pump.</text>
</comment>
<comment type="subcellular location">
    <subcellularLocation>
        <location evidence="1">Cell inner membrane</location>
        <topology evidence="1">Multi-pass membrane protein</topology>
    </subcellularLocation>
</comment>
<comment type="similarity">
    <text evidence="1">Belongs to the MntP (TC 9.B.29) family.</text>
</comment>